<dbReference type="EC" id="2.7.10.1"/>
<dbReference type="EMBL" id="D13225">
    <property type="protein sequence ID" value="BAA02506.1"/>
    <property type="molecule type" value="mRNA"/>
</dbReference>
<dbReference type="PIR" id="JN0677">
    <property type="entry name" value="JN0677"/>
</dbReference>
<dbReference type="RefSeq" id="NP_989692.1">
    <property type="nucleotide sequence ID" value="NM_204361.1"/>
</dbReference>
<dbReference type="SMR" id="Q08156"/>
<dbReference type="FunCoup" id="Q08156">
    <property type="interactions" value="214"/>
</dbReference>
<dbReference type="STRING" id="9031.ENSGALP00000051217"/>
<dbReference type="GlyCosmos" id="Q08156">
    <property type="glycosylation" value="12 sites, No reported glycans"/>
</dbReference>
<dbReference type="GlyGen" id="Q08156">
    <property type="glycosylation" value="12 sites"/>
</dbReference>
<dbReference type="PaxDb" id="9031-ENSGALP00000022531"/>
<dbReference type="Ensembl" id="ENSGALT00010032032.1">
    <property type="protein sequence ID" value="ENSGALP00010018822.1"/>
    <property type="gene ID" value="ENSGALG00010013314.1"/>
</dbReference>
<dbReference type="GeneID" id="378783"/>
<dbReference type="KEGG" id="gga:378783"/>
<dbReference type="CTD" id="3815"/>
<dbReference type="VEuPathDB" id="HostDB:geneid_378783"/>
<dbReference type="eggNOG" id="KOG0200">
    <property type="taxonomic scope" value="Eukaryota"/>
</dbReference>
<dbReference type="GeneTree" id="ENSGT00940000155626"/>
<dbReference type="HOGENOM" id="CLU_000288_49_0_1"/>
<dbReference type="InParanoid" id="Q08156"/>
<dbReference type="OMA" id="CDSTNEY"/>
<dbReference type="OrthoDB" id="6077854at2759"/>
<dbReference type="PhylomeDB" id="Q08156"/>
<dbReference type="BRENDA" id="2.7.10.1">
    <property type="organism ID" value="1306"/>
</dbReference>
<dbReference type="Reactome" id="R-GGA-1257604">
    <property type="pathway name" value="PIP3 activates AKT signaling"/>
</dbReference>
<dbReference type="Reactome" id="R-GGA-1433557">
    <property type="pathway name" value="Signaling by SCF-KIT"/>
</dbReference>
<dbReference type="Reactome" id="R-GGA-1433559">
    <property type="pathway name" value="Regulation of KIT signaling"/>
</dbReference>
<dbReference type="Reactome" id="R-GGA-5673001">
    <property type="pathway name" value="RAF/MAP kinase cascade"/>
</dbReference>
<dbReference type="Reactome" id="R-GGA-6811558">
    <property type="pathway name" value="PI5P, PP2A and IER3 Regulate PI3K/AKT Signaling"/>
</dbReference>
<dbReference type="Reactome" id="R-GGA-9856649">
    <property type="pathway name" value="Transcriptional and post-translational regulation of MITF-M expression and activity"/>
</dbReference>
<dbReference type="PRO" id="PR:Q08156"/>
<dbReference type="Proteomes" id="UP000000539">
    <property type="component" value="Chromosome 4"/>
</dbReference>
<dbReference type="Bgee" id="ENSGALG00000038634">
    <property type="expression patterns" value="Expressed in lung and 11 other cell types or tissues"/>
</dbReference>
<dbReference type="GO" id="GO:0005911">
    <property type="term" value="C:cell-cell junction"/>
    <property type="evidence" value="ECO:0007669"/>
    <property type="project" value="Ensembl"/>
</dbReference>
<dbReference type="GO" id="GO:0009897">
    <property type="term" value="C:external side of plasma membrane"/>
    <property type="evidence" value="ECO:0007669"/>
    <property type="project" value="Ensembl"/>
</dbReference>
<dbReference type="GO" id="GO:0005615">
    <property type="term" value="C:extracellular space"/>
    <property type="evidence" value="ECO:0007669"/>
    <property type="project" value="Ensembl"/>
</dbReference>
<dbReference type="GO" id="GO:0001650">
    <property type="term" value="C:fibrillar center"/>
    <property type="evidence" value="ECO:0007669"/>
    <property type="project" value="Ensembl"/>
</dbReference>
<dbReference type="GO" id="GO:0005886">
    <property type="term" value="C:plasma membrane"/>
    <property type="evidence" value="ECO:0000318"/>
    <property type="project" value="GO_Central"/>
</dbReference>
<dbReference type="GO" id="GO:0043235">
    <property type="term" value="C:receptor complex"/>
    <property type="evidence" value="ECO:0000318"/>
    <property type="project" value="GO_Central"/>
</dbReference>
<dbReference type="GO" id="GO:0005524">
    <property type="term" value="F:ATP binding"/>
    <property type="evidence" value="ECO:0007669"/>
    <property type="project" value="UniProtKB-KW"/>
</dbReference>
<dbReference type="GO" id="GO:0019955">
    <property type="term" value="F:cytokine binding"/>
    <property type="evidence" value="ECO:0007669"/>
    <property type="project" value="Ensembl"/>
</dbReference>
<dbReference type="GO" id="GO:0019838">
    <property type="term" value="F:growth factor binding"/>
    <property type="evidence" value="ECO:0000318"/>
    <property type="project" value="GO_Central"/>
</dbReference>
<dbReference type="GO" id="GO:0046872">
    <property type="term" value="F:metal ion binding"/>
    <property type="evidence" value="ECO:0007669"/>
    <property type="project" value="UniProtKB-KW"/>
</dbReference>
<dbReference type="GO" id="GO:0002020">
    <property type="term" value="F:protease binding"/>
    <property type="evidence" value="ECO:0007669"/>
    <property type="project" value="Ensembl"/>
</dbReference>
<dbReference type="GO" id="GO:0042803">
    <property type="term" value="F:protein homodimerization activity"/>
    <property type="evidence" value="ECO:0007669"/>
    <property type="project" value="Ensembl"/>
</dbReference>
<dbReference type="GO" id="GO:0042169">
    <property type="term" value="F:SH2 domain binding"/>
    <property type="evidence" value="ECO:0007669"/>
    <property type="project" value="Ensembl"/>
</dbReference>
<dbReference type="GO" id="GO:0005020">
    <property type="term" value="F:stem cell factor receptor activity"/>
    <property type="evidence" value="ECO:0007669"/>
    <property type="project" value="Ensembl"/>
</dbReference>
<dbReference type="GO" id="GO:0004714">
    <property type="term" value="F:transmembrane receptor protein tyrosine kinase activity"/>
    <property type="evidence" value="ECO:0000318"/>
    <property type="project" value="GO_Central"/>
</dbReference>
<dbReference type="GO" id="GO:0030036">
    <property type="term" value="P:actin cytoskeleton organization"/>
    <property type="evidence" value="ECO:0007669"/>
    <property type="project" value="Ensembl"/>
</dbReference>
<dbReference type="GO" id="GO:0030183">
    <property type="term" value="P:B cell differentiation"/>
    <property type="evidence" value="ECO:0000318"/>
    <property type="project" value="GO_Central"/>
</dbReference>
<dbReference type="GO" id="GO:0016477">
    <property type="term" value="P:cell migration"/>
    <property type="evidence" value="ECO:0000318"/>
    <property type="project" value="GO_Central"/>
</dbReference>
<dbReference type="GO" id="GO:0050910">
    <property type="term" value="P:detection of mechanical stimulus involved in sensory perception of sound"/>
    <property type="evidence" value="ECO:0007669"/>
    <property type="project" value="Ensembl"/>
</dbReference>
<dbReference type="GO" id="GO:0048565">
    <property type="term" value="P:digestive tract development"/>
    <property type="evidence" value="ECO:0007669"/>
    <property type="project" value="Ensembl"/>
</dbReference>
<dbReference type="GO" id="GO:0035234">
    <property type="term" value="P:ectopic germ cell programmed cell death"/>
    <property type="evidence" value="ECO:0007669"/>
    <property type="project" value="Ensembl"/>
</dbReference>
<dbReference type="GO" id="GO:0035162">
    <property type="term" value="P:embryonic hemopoiesis"/>
    <property type="evidence" value="ECO:0007669"/>
    <property type="project" value="Ensembl"/>
</dbReference>
<dbReference type="GO" id="GO:0030218">
    <property type="term" value="P:erythrocyte differentiation"/>
    <property type="evidence" value="ECO:0007669"/>
    <property type="project" value="Ensembl"/>
</dbReference>
<dbReference type="GO" id="GO:0038162">
    <property type="term" value="P:erythropoietin-mediated signaling pathway"/>
    <property type="evidence" value="ECO:0007669"/>
    <property type="project" value="Ensembl"/>
</dbReference>
<dbReference type="GO" id="GO:0038093">
    <property type="term" value="P:Fc receptor signaling pathway"/>
    <property type="evidence" value="ECO:0007669"/>
    <property type="project" value="Ensembl"/>
</dbReference>
<dbReference type="GO" id="GO:0006687">
    <property type="term" value="P:glycosphingolipid metabolic process"/>
    <property type="evidence" value="ECO:0007669"/>
    <property type="project" value="Ensembl"/>
</dbReference>
<dbReference type="GO" id="GO:0002244">
    <property type="term" value="P:hematopoietic progenitor cell differentiation"/>
    <property type="evidence" value="ECO:0000318"/>
    <property type="project" value="GO_Central"/>
</dbReference>
<dbReference type="GO" id="GO:0035701">
    <property type="term" value="P:hematopoietic stem cell migration"/>
    <property type="evidence" value="ECO:0007669"/>
    <property type="project" value="Ensembl"/>
</dbReference>
<dbReference type="GO" id="GO:0006954">
    <property type="term" value="P:inflammatory response"/>
    <property type="evidence" value="ECO:0007669"/>
    <property type="project" value="Ensembl"/>
</dbReference>
<dbReference type="GO" id="GO:0035556">
    <property type="term" value="P:intracellular signal transduction"/>
    <property type="evidence" value="ECO:0007669"/>
    <property type="project" value="Ensembl"/>
</dbReference>
<dbReference type="GO" id="GO:0038109">
    <property type="term" value="P:Kit signaling pathway"/>
    <property type="evidence" value="ECO:0000318"/>
    <property type="project" value="GO_Central"/>
</dbReference>
<dbReference type="GO" id="GO:0030032">
    <property type="term" value="P:lamellipodium assembly"/>
    <property type="evidence" value="ECO:0007669"/>
    <property type="project" value="Ensembl"/>
</dbReference>
<dbReference type="GO" id="GO:0002320">
    <property type="term" value="P:lymphoid progenitor cell differentiation"/>
    <property type="evidence" value="ECO:0007669"/>
    <property type="project" value="Ensembl"/>
</dbReference>
<dbReference type="GO" id="GO:0008584">
    <property type="term" value="P:male gonad development"/>
    <property type="evidence" value="ECO:0007669"/>
    <property type="project" value="Ensembl"/>
</dbReference>
<dbReference type="GO" id="GO:0002551">
    <property type="term" value="P:mast cell chemotaxis"/>
    <property type="evidence" value="ECO:0007669"/>
    <property type="project" value="Ensembl"/>
</dbReference>
<dbReference type="GO" id="GO:0043303">
    <property type="term" value="P:mast cell degranulation"/>
    <property type="evidence" value="ECO:0007669"/>
    <property type="project" value="Ensembl"/>
</dbReference>
<dbReference type="GO" id="GO:0060374">
    <property type="term" value="P:mast cell differentiation"/>
    <property type="evidence" value="ECO:0007669"/>
    <property type="project" value="Ensembl"/>
</dbReference>
<dbReference type="GO" id="GO:0070662">
    <property type="term" value="P:mast cell proliferation"/>
    <property type="evidence" value="ECO:0007669"/>
    <property type="project" value="Ensembl"/>
</dbReference>
<dbReference type="GO" id="GO:0035855">
    <property type="term" value="P:megakaryocyte development"/>
    <property type="evidence" value="ECO:0007669"/>
    <property type="project" value="Ensembl"/>
</dbReference>
<dbReference type="GO" id="GO:0097326">
    <property type="term" value="P:melanocyte adhesion"/>
    <property type="evidence" value="ECO:0007669"/>
    <property type="project" value="Ensembl"/>
</dbReference>
<dbReference type="GO" id="GO:0030318">
    <property type="term" value="P:melanocyte differentiation"/>
    <property type="evidence" value="ECO:0007669"/>
    <property type="project" value="Ensembl"/>
</dbReference>
<dbReference type="GO" id="GO:0097324">
    <property type="term" value="P:melanocyte migration"/>
    <property type="evidence" value="ECO:0007669"/>
    <property type="project" value="Ensembl"/>
</dbReference>
<dbReference type="GO" id="GO:0002318">
    <property type="term" value="P:myeloid progenitor cell differentiation"/>
    <property type="evidence" value="ECO:0007669"/>
    <property type="project" value="Ensembl"/>
</dbReference>
<dbReference type="GO" id="GO:0051093">
    <property type="term" value="P:negative regulation of developmental process"/>
    <property type="evidence" value="ECO:0007669"/>
    <property type="project" value="Ensembl"/>
</dbReference>
<dbReference type="GO" id="GO:0043069">
    <property type="term" value="P:negative regulation of programmed cell death"/>
    <property type="evidence" value="ECO:0007669"/>
    <property type="project" value="Ensembl"/>
</dbReference>
<dbReference type="GO" id="GO:2000242">
    <property type="term" value="P:negative regulation of reproductive process"/>
    <property type="evidence" value="ECO:0007669"/>
    <property type="project" value="Ensembl"/>
</dbReference>
<dbReference type="GO" id="GO:0001541">
    <property type="term" value="P:ovarian follicle development"/>
    <property type="evidence" value="ECO:0007669"/>
    <property type="project" value="Ensembl"/>
</dbReference>
<dbReference type="GO" id="GO:0030335">
    <property type="term" value="P:positive regulation of cell migration"/>
    <property type="evidence" value="ECO:0000318"/>
    <property type="project" value="GO_Central"/>
</dbReference>
<dbReference type="GO" id="GO:0008284">
    <property type="term" value="P:positive regulation of cell population proliferation"/>
    <property type="evidence" value="ECO:0000318"/>
    <property type="project" value="GO_Central"/>
</dbReference>
<dbReference type="GO" id="GO:0002732">
    <property type="term" value="P:positive regulation of dendritic cell cytokine production"/>
    <property type="evidence" value="ECO:0007669"/>
    <property type="project" value="Ensembl"/>
</dbReference>
<dbReference type="GO" id="GO:0043410">
    <property type="term" value="P:positive regulation of MAPK cascade"/>
    <property type="evidence" value="ECO:0007669"/>
    <property type="project" value="Ensembl"/>
</dbReference>
<dbReference type="GO" id="GO:0032765">
    <property type="term" value="P:positive regulation of mast cell cytokine production"/>
    <property type="evidence" value="ECO:0007669"/>
    <property type="project" value="Ensembl"/>
</dbReference>
<dbReference type="GO" id="GO:0070668">
    <property type="term" value="P:positive regulation of mast cell proliferation"/>
    <property type="evidence" value="ECO:0007669"/>
    <property type="project" value="Ensembl"/>
</dbReference>
<dbReference type="GO" id="GO:0046427">
    <property type="term" value="P:positive regulation of receptor signaling pathway via JAK-STAT"/>
    <property type="evidence" value="ECO:0000318"/>
    <property type="project" value="GO_Central"/>
</dbReference>
<dbReference type="GO" id="GO:1905065">
    <property type="term" value="P:positive regulation of vascular associated smooth muscle cell differentiation"/>
    <property type="evidence" value="ECO:0007669"/>
    <property type="project" value="Ensembl"/>
</dbReference>
<dbReference type="GO" id="GO:0008360">
    <property type="term" value="P:regulation of cell shape"/>
    <property type="evidence" value="ECO:0007669"/>
    <property type="project" value="Ensembl"/>
</dbReference>
<dbReference type="GO" id="GO:0009314">
    <property type="term" value="P:response to radiation"/>
    <property type="evidence" value="ECO:0007669"/>
    <property type="project" value="Ensembl"/>
</dbReference>
<dbReference type="GO" id="GO:0007286">
    <property type="term" value="P:spermatid development"/>
    <property type="evidence" value="ECO:0007669"/>
    <property type="project" value="Ensembl"/>
</dbReference>
<dbReference type="GO" id="GO:0048863">
    <property type="term" value="P:stem cell differentiation"/>
    <property type="evidence" value="ECO:0007669"/>
    <property type="project" value="Ensembl"/>
</dbReference>
<dbReference type="GO" id="GO:0030217">
    <property type="term" value="P:T cell differentiation"/>
    <property type="evidence" value="ECO:0007669"/>
    <property type="project" value="Ensembl"/>
</dbReference>
<dbReference type="CDD" id="cd05860">
    <property type="entry name" value="IgI_4_SCFR"/>
    <property type="match status" value="1"/>
</dbReference>
<dbReference type="CDD" id="cd05104">
    <property type="entry name" value="PTKc_Kit"/>
    <property type="match status" value="1"/>
</dbReference>
<dbReference type="FunFam" id="2.60.40.10:FF:004504">
    <property type="match status" value="1"/>
</dbReference>
<dbReference type="FunFam" id="1.10.510.10:FF:000177">
    <property type="entry name" value="Mast/stem cell growth factor receptor"/>
    <property type="match status" value="1"/>
</dbReference>
<dbReference type="FunFam" id="2.60.40.10:FF:000422">
    <property type="entry name" value="Mast/stem cell growth factor receptor"/>
    <property type="match status" value="1"/>
</dbReference>
<dbReference type="FunFam" id="2.60.40.10:FF:000429">
    <property type="entry name" value="Mast/stem cell growth factor receptor"/>
    <property type="match status" value="1"/>
</dbReference>
<dbReference type="FunFam" id="2.60.40.10:FF:000469">
    <property type="entry name" value="Mast/stem cell growth factor receptor"/>
    <property type="match status" value="1"/>
</dbReference>
<dbReference type="FunFam" id="2.60.40.10:FF:001913">
    <property type="entry name" value="Mast/stem cell growth factor receptor Kit"/>
    <property type="match status" value="1"/>
</dbReference>
<dbReference type="FunFam" id="3.30.200.20:FF:000025">
    <property type="entry name" value="Platelet-derived growth factor receptor alpha"/>
    <property type="match status" value="1"/>
</dbReference>
<dbReference type="Gene3D" id="2.60.40.10">
    <property type="entry name" value="Immunoglobulins"/>
    <property type="match status" value="5"/>
</dbReference>
<dbReference type="Gene3D" id="3.30.200.20">
    <property type="entry name" value="Phosphorylase Kinase, domain 1"/>
    <property type="match status" value="1"/>
</dbReference>
<dbReference type="Gene3D" id="1.10.510.10">
    <property type="entry name" value="Transferase(Phosphotransferase) domain 1"/>
    <property type="match status" value="1"/>
</dbReference>
<dbReference type="InterPro" id="IPR007110">
    <property type="entry name" value="Ig-like_dom"/>
</dbReference>
<dbReference type="InterPro" id="IPR036179">
    <property type="entry name" value="Ig-like_dom_sf"/>
</dbReference>
<dbReference type="InterPro" id="IPR013783">
    <property type="entry name" value="Ig-like_fold"/>
</dbReference>
<dbReference type="InterPro" id="IPR003599">
    <property type="entry name" value="Ig_sub"/>
</dbReference>
<dbReference type="InterPro" id="IPR003598">
    <property type="entry name" value="Ig_sub2"/>
</dbReference>
<dbReference type="InterPro" id="IPR013151">
    <property type="entry name" value="Immunoglobulin_dom"/>
</dbReference>
<dbReference type="InterPro" id="IPR011009">
    <property type="entry name" value="Kinase-like_dom_sf"/>
</dbReference>
<dbReference type="InterPro" id="IPR000719">
    <property type="entry name" value="Prot_kinase_dom"/>
</dbReference>
<dbReference type="InterPro" id="IPR017441">
    <property type="entry name" value="Protein_kinase_ATP_BS"/>
</dbReference>
<dbReference type="InterPro" id="IPR050122">
    <property type="entry name" value="RTK"/>
</dbReference>
<dbReference type="InterPro" id="IPR027263">
    <property type="entry name" value="SCGF_receptor"/>
</dbReference>
<dbReference type="InterPro" id="IPR001245">
    <property type="entry name" value="Ser-Thr/Tyr_kinase_cat_dom"/>
</dbReference>
<dbReference type="InterPro" id="IPR008266">
    <property type="entry name" value="Tyr_kinase_AS"/>
</dbReference>
<dbReference type="InterPro" id="IPR020635">
    <property type="entry name" value="Tyr_kinase_cat_dom"/>
</dbReference>
<dbReference type="InterPro" id="IPR001824">
    <property type="entry name" value="Tyr_kinase_rcpt_3_CS"/>
</dbReference>
<dbReference type="PANTHER" id="PTHR24416:SF46">
    <property type="entry name" value="MAST_STEM CELL GROWTH FACTOR RECEPTOR KIT"/>
    <property type="match status" value="1"/>
</dbReference>
<dbReference type="PANTHER" id="PTHR24416">
    <property type="entry name" value="TYROSINE-PROTEIN KINASE RECEPTOR"/>
    <property type="match status" value="1"/>
</dbReference>
<dbReference type="Pfam" id="PF00047">
    <property type="entry name" value="ig"/>
    <property type="match status" value="1"/>
</dbReference>
<dbReference type="Pfam" id="PF25305">
    <property type="entry name" value="Ig_PDGFR_d4"/>
    <property type="match status" value="1"/>
</dbReference>
<dbReference type="Pfam" id="PF07714">
    <property type="entry name" value="PK_Tyr_Ser-Thr"/>
    <property type="match status" value="1"/>
</dbReference>
<dbReference type="PIRSF" id="PIRSF500951">
    <property type="entry name" value="SCGF_recepter"/>
    <property type="match status" value="1"/>
</dbReference>
<dbReference type="PIRSF" id="PIRSF000615">
    <property type="entry name" value="TyrPK_CSF1-R"/>
    <property type="match status" value="1"/>
</dbReference>
<dbReference type="SMART" id="SM00409">
    <property type="entry name" value="IG"/>
    <property type="match status" value="4"/>
</dbReference>
<dbReference type="SMART" id="SM00408">
    <property type="entry name" value="IGc2"/>
    <property type="match status" value="3"/>
</dbReference>
<dbReference type="SMART" id="SM00219">
    <property type="entry name" value="TyrKc"/>
    <property type="match status" value="1"/>
</dbReference>
<dbReference type="SUPFAM" id="SSF48726">
    <property type="entry name" value="Immunoglobulin"/>
    <property type="match status" value="5"/>
</dbReference>
<dbReference type="SUPFAM" id="SSF56112">
    <property type="entry name" value="Protein kinase-like (PK-like)"/>
    <property type="match status" value="1"/>
</dbReference>
<dbReference type="PROSITE" id="PS50835">
    <property type="entry name" value="IG_LIKE"/>
    <property type="match status" value="1"/>
</dbReference>
<dbReference type="PROSITE" id="PS00107">
    <property type="entry name" value="PROTEIN_KINASE_ATP"/>
    <property type="match status" value="1"/>
</dbReference>
<dbReference type="PROSITE" id="PS50011">
    <property type="entry name" value="PROTEIN_KINASE_DOM"/>
    <property type="match status" value="1"/>
</dbReference>
<dbReference type="PROSITE" id="PS00109">
    <property type="entry name" value="PROTEIN_KINASE_TYR"/>
    <property type="match status" value="1"/>
</dbReference>
<dbReference type="PROSITE" id="PS00240">
    <property type="entry name" value="RECEPTOR_TYR_KIN_III"/>
    <property type="match status" value="1"/>
</dbReference>
<organism>
    <name type="scientific">Gallus gallus</name>
    <name type="common">Chicken</name>
    <dbReference type="NCBI Taxonomy" id="9031"/>
    <lineage>
        <taxon>Eukaryota</taxon>
        <taxon>Metazoa</taxon>
        <taxon>Chordata</taxon>
        <taxon>Craniata</taxon>
        <taxon>Vertebrata</taxon>
        <taxon>Euteleostomi</taxon>
        <taxon>Archelosauria</taxon>
        <taxon>Archosauria</taxon>
        <taxon>Dinosauria</taxon>
        <taxon>Saurischia</taxon>
        <taxon>Theropoda</taxon>
        <taxon>Coelurosauria</taxon>
        <taxon>Aves</taxon>
        <taxon>Neognathae</taxon>
        <taxon>Galloanserae</taxon>
        <taxon>Galliformes</taxon>
        <taxon>Phasianidae</taxon>
        <taxon>Phasianinae</taxon>
        <taxon>Gallus</taxon>
    </lineage>
</organism>
<keyword id="KW-0067">ATP-binding</keyword>
<keyword id="KW-1003">Cell membrane</keyword>
<keyword id="KW-1015">Disulfide bond</keyword>
<keyword id="KW-0325">Glycoprotein</keyword>
<keyword id="KW-0393">Immunoglobulin domain</keyword>
<keyword id="KW-0418">Kinase</keyword>
<keyword id="KW-0460">Magnesium</keyword>
<keyword id="KW-0472">Membrane</keyword>
<keyword id="KW-0479">Metal-binding</keyword>
<keyword id="KW-0547">Nucleotide-binding</keyword>
<keyword id="KW-0597">Phosphoprotein</keyword>
<keyword id="KW-0656">Proto-oncogene</keyword>
<keyword id="KW-0675">Receptor</keyword>
<keyword id="KW-1185">Reference proteome</keyword>
<keyword id="KW-0677">Repeat</keyword>
<keyword id="KW-0732">Signal</keyword>
<keyword id="KW-0808">Transferase</keyword>
<keyword id="KW-0812">Transmembrane</keyword>
<keyword id="KW-1133">Transmembrane helix</keyword>
<keyword id="KW-0829">Tyrosine-protein kinase</keyword>
<keyword id="KW-0832">Ubl conjugation</keyword>
<accession>Q08156</accession>
<gene>
    <name type="primary">KIT</name>
</gene>
<sequence>MEGAHLAWELAHAVLLLSLIPAGGSVPHEESSLVVNKGEELRLKCNEEGPVTWNFQNSDPSAKTRISNEKEWHTKNATIRDIGRYECKSKGSIVNSFYVFVKDPNVLFLVDSLIYGKEDSDILLVCPLTDPDVLNFTLRKCDGKPLPKNMTFIPNPQKGIIIKNVQRSFKGCYQCLAKHNGVEKISEHIFLNVRPVHKALPVITLSKSYELLKEGEEFEVTCIITDVDSSVKASWISYKSAIVTSKSRNLGDYGYERKLTLNIRSVGVNDSGEFTCQAENPFGKTNATVTLKALAKGFVRLFATMNTTIDINAGQNGNLTVEYEAYPKPKEEVWMYMNETLQNSSDHYVKFKTVGNNSYTSELHLTRLKGTEGGIYTFFVSNSDASSSVTFNVYVKTKPEILTLDMLGNDILQCVATGFPAPTIYWYFCPGTEQRCLDSPTISPMDVKVSYTNSSVPSFERILVESTVNASMFKSTGTICCEASSNGDKSSVFFNFAIKEQIRTHTLFTPLLIAFGVAAGLMCIIVMILVYIYLQKPKYEVQWKVVEEINGNNYVYIDPTQLPYDHKWEFPRNRLSFGKTLGAGAFGKVVEATAYGLFKSDAAMTVAVKMLKPSAHLTEREALMSELKVLSYLGNHINIVNLLGACTIGGPTLVITEYCCYGDLLNFLRRKRDSFICPKHEEHAEAAVYENLLHQAEPTADAVNEYMDMKPGVSYAVPPKADKKRPVKSGSYTDQDVTLSMLEDDELALDVEDLLSFSYQVAKGMSFLASKNCIHRDLAARNILLTHGRITKICDFGLARDIRNDSNYVVKGNARLPVKWMAPESIFNCVYTFESDVWSYGILLWELFSLGSSPYPGMPVDSKFYKMIKEGYRMFSPECSPPEMYDIMKSCWDADPLQRPTFKQIVQLIEQQLSDNAPRVYANFSTPPSTQGNATDHSVRINSVGSSASSTQPLLVREDV</sequence>
<proteinExistence type="evidence at transcript level"/>
<reference key="1">
    <citation type="journal article" date="1993" name="Gene">
        <title>Cloning and expression of the chicken c-kit proto-oncogene.</title>
        <authorList>
            <person name="Sasaki E."/>
            <person name="Okamura H."/>
            <person name="Chikamune T."/>
            <person name="Kanai Y."/>
            <person name="Watanabe M."/>
            <person name="Naito M."/>
            <person name="Sakurai M."/>
        </authorList>
    </citation>
    <scope>NUCLEOTIDE SEQUENCE [MRNA]</scope>
    <source>
        <strain>White leghorn</strain>
        <tissue>Brain</tissue>
    </source>
</reference>
<name>KIT_CHICK</name>
<evidence type="ECO:0000250" key="1"/>
<evidence type="ECO:0000255" key="2"/>
<evidence type="ECO:0000255" key="3">
    <source>
        <dbReference type="PROSITE-ProRule" id="PRU00114"/>
    </source>
</evidence>
<evidence type="ECO:0000255" key="4">
    <source>
        <dbReference type="PROSITE-ProRule" id="PRU00159"/>
    </source>
</evidence>
<evidence type="ECO:0000255" key="5">
    <source>
        <dbReference type="PROSITE-ProRule" id="PRU10028"/>
    </source>
</evidence>
<protein>
    <recommendedName>
        <fullName>Mast/stem cell growth factor receptor Kit</fullName>
        <shortName>SCFR</shortName>
        <ecNumber>2.7.10.1</ecNumber>
    </recommendedName>
    <alternativeName>
        <fullName>Proto-oncogene c-Kit</fullName>
    </alternativeName>
    <alternativeName>
        <fullName>Tyrosine-protein kinase Kit</fullName>
    </alternativeName>
</protein>
<comment type="function">
    <text evidence="1">Tyrosine-protein kinase that acts as a cell-surface receptor for the cytokine KITLG/SCF and plays an essential role in the regulation of cell survival and proliferation, hematopoiesis, stem cell maintenance, gametogenesis, mast cell development, migration and function, and in melanogenesis. In response to KITLG/SCF binding, KIT can activate several signaling pathways. Promotes phosphorylation of PIK3R1, the regulatory subunit of phosphatidylinositol 3-kinase, and subsequent activation of the kinase AKT1. Activated KIT also transmits signals via GRB2 and activation of RAS, RAF1 and the MAP kinases MAPK1/ERK2 and/or MAPK3/ERK1. Promotes activation of STAT family members STAT1, STAT3, STAT5A and STAT5B. KIT promotes activation of PLCG1, leading to the production of the cellular signaling molecules diacylglycerol and inositol 1,4,5-trisphosphate. KIT signaling is modulated by protein phosphatases, and by rapid internalization and degradation of the receptor (By similarity).</text>
</comment>
<comment type="catalytic activity">
    <reaction evidence="5">
        <text>L-tyrosyl-[protein] + ATP = O-phospho-L-tyrosyl-[protein] + ADP + H(+)</text>
        <dbReference type="Rhea" id="RHEA:10596"/>
        <dbReference type="Rhea" id="RHEA-COMP:10136"/>
        <dbReference type="Rhea" id="RHEA-COMP:20101"/>
        <dbReference type="ChEBI" id="CHEBI:15378"/>
        <dbReference type="ChEBI" id="CHEBI:30616"/>
        <dbReference type="ChEBI" id="CHEBI:46858"/>
        <dbReference type="ChEBI" id="CHEBI:61978"/>
        <dbReference type="ChEBI" id="CHEBI:456216"/>
        <dbReference type="EC" id="2.7.10.1"/>
    </reaction>
</comment>
<comment type="subcellular location">
    <subcellularLocation>
        <location>Cell membrane</location>
        <topology>Single-pass type I membrane protein</topology>
    </subcellularLocation>
</comment>
<comment type="tissue specificity">
    <text>High in the brain and testes and also present in the bursa of Fabricus, heart, kidney, lung, spleen thymus and ovary.</text>
</comment>
<comment type="PTM">
    <text evidence="1">Ubiquitinated. KIT is rapidly ubiquitinated after autophosphorylation induced by KITLG/SCF binding, leading to internalization and degradation.</text>
</comment>
<comment type="PTM">
    <text evidence="1">Autophosphorylated on tyrosine residues. KITLG/SCF binding promotes autophosphorylation. Phosphorylated tyrosine residues are important for interaction with specific binding partners (By similarity).</text>
</comment>
<comment type="similarity">
    <text evidence="4">Belongs to the protein kinase superfamily. Tyr protein kinase family. CSF-1/PDGF receptor subfamily.</text>
</comment>
<feature type="signal peptide" evidence="2">
    <location>
        <begin position="1"/>
        <end position="24"/>
    </location>
</feature>
<feature type="chain" id="PRO_0000016756" description="Mast/stem cell growth factor receptor Kit">
    <location>
        <begin position="25"/>
        <end position="960"/>
    </location>
</feature>
<feature type="topological domain" description="Extracellular" evidence="2">
    <location>
        <begin position="25"/>
        <end position="511"/>
    </location>
</feature>
<feature type="transmembrane region" description="Helical" evidence="2">
    <location>
        <begin position="512"/>
        <end position="532"/>
    </location>
</feature>
<feature type="topological domain" description="Cytoplasmic" evidence="2">
    <location>
        <begin position="533"/>
        <end position="960"/>
    </location>
</feature>
<feature type="domain" description="Ig-like C2-type 1">
    <location>
        <begin position="27"/>
        <end position="102"/>
    </location>
</feature>
<feature type="domain" description="Ig-like C2-type 2">
    <location>
        <begin position="111"/>
        <end position="194"/>
    </location>
</feature>
<feature type="domain" description="Ig-like C2-type 3">
    <location>
        <begin position="201"/>
        <end position="294"/>
    </location>
</feature>
<feature type="domain" description="Ig-like C2-type 4">
    <location>
        <begin position="303"/>
        <end position="396"/>
    </location>
</feature>
<feature type="domain" description="Ig-like C2-type 5">
    <location>
        <begin position="399"/>
        <end position="497"/>
    </location>
</feature>
<feature type="domain" description="Protein kinase" evidence="4">
    <location>
        <begin position="575"/>
        <end position="913"/>
    </location>
</feature>
<feature type="active site" description="Proton acceptor" evidence="4 5">
    <location>
        <position position="777"/>
    </location>
</feature>
<feature type="binding site" evidence="1">
    <location>
        <position position="554"/>
    </location>
    <ligand>
        <name>Mg(2+)</name>
        <dbReference type="ChEBI" id="CHEBI:18420"/>
    </ligand>
</feature>
<feature type="binding site" evidence="4">
    <location>
        <begin position="582"/>
        <end position="589"/>
    </location>
    <ligand>
        <name>ATP</name>
        <dbReference type="ChEBI" id="CHEBI:30616"/>
    </ligand>
</feature>
<feature type="binding site" evidence="4">
    <location>
        <position position="609"/>
    </location>
    <ligand>
        <name>ATP</name>
        <dbReference type="ChEBI" id="CHEBI:30616"/>
    </ligand>
</feature>
<feature type="binding site" evidence="4">
    <location>
        <begin position="657"/>
        <end position="663"/>
    </location>
    <ligand>
        <name>ATP</name>
        <dbReference type="ChEBI" id="CHEBI:30616"/>
    </ligand>
</feature>
<feature type="binding site" evidence="4">
    <location>
        <position position="781"/>
    </location>
    <ligand>
        <name>ATP</name>
        <dbReference type="ChEBI" id="CHEBI:30616"/>
    </ligand>
</feature>
<feature type="binding site" evidence="1">
    <location>
        <position position="782"/>
    </location>
    <ligand>
        <name>Mg(2+)</name>
        <dbReference type="ChEBI" id="CHEBI:18420"/>
    </ligand>
</feature>
<feature type="binding site" evidence="1">
    <location>
        <position position="795"/>
    </location>
    <ligand>
        <name>Mg(2+)</name>
        <dbReference type="ChEBI" id="CHEBI:18420"/>
    </ligand>
</feature>
<feature type="modified residue" description="Phosphotyrosine; by autocatalysis" evidence="1">
    <location>
        <position position="554"/>
    </location>
</feature>
<feature type="modified residue" description="Phosphotyrosine; by autocatalysis" evidence="1">
    <location>
        <position position="556"/>
    </location>
</feature>
<feature type="modified residue" description="Phosphotyrosine; by autocatalysis" evidence="1">
    <location>
        <position position="689"/>
    </location>
</feature>
<feature type="modified residue" description="Phosphotyrosine; by autocatalysis" evidence="1">
    <location>
        <position position="706"/>
    </location>
</feature>
<feature type="modified residue" description="Phosphotyrosine; by autocatalysis" evidence="1">
    <location>
        <position position="808"/>
    </location>
</feature>
<feature type="modified residue" description="Phosphotyrosine; by autocatalysis" evidence="1">
    <location>
        <position position="921"/>
    </location>
</feature>
<feature type="glycosylation site" description="N-linked (GlcNAc...) asparagine" evidence="2">
    <location>
        <position position="76"/>
    </location>
</feature>
<feature type="glycosylation site" description="N-linked (GlcNAc...) asparagine" evidence="2">
    <location>
        <position position="135"/>
    </location>
</feature>
<feature type="glycosylation site" description="N-linked (GlcNAc...) asparagine" evidence="2">
    <location>
        <position position="149"/>
    </location>
</feature>
<feature type="glycosylation site" description="N-linked (GlcNAc...) asparagine" evidence="2">
    <location>
        <position position="269"/>
    </location>
</feature>
<feature type="glycosylation site" description="N-linked (GlcNAc...) asparagine" evidence="2">
    <location>
        <position position="286"/>
    </location>
</feature>
<feature type="glycosylation site" description="N-linked (GlcNAc...) asparagine" evidence="2">
    <location>
        <position position="306"/>
    </location>
</feature>
<feature type="glycosylation site" description="N-linked (GlcNAc...) asparagine" evidence="2">
    <location>
        <position position="318"/>
    </location>
</feature>
<feature type="glycosylation site" description="N-linked (GlcNAc...) asparagine" evidence="2">
    <location>
        <position position="338"/>
    </location>
</feature>
<feature type="glycosylation site" description="N-linked (GlcNAc...) asparagine" evidence="2">
    <location>
        <position position="343"/>
    </location>
</feature>
<feature type="glycosylation site" description="N-linked (GlcNAc...) asparagine" evidence="2">
    <location>
        <position position="356"/>
    </location>
</feature>
<feature type="glycosylation site" description="N-linked (GlcNAc...) asparagine" evidence="2">
    <location>
        <position position="453"/>
    </location>
</feature>
<feature type="glycosylation site" description="N-linked (GlcNAc...) asparagine" evidence="2">
    <location>
        <position position="469"/>
    </location>
</feature>
<feature type="disulfide bond" evidence="3">
    <location>
        <begin position="45"/>
        <end position="87"/>
    </location>
</feature>
<feature type="disulfide bond" evidence="3">
    <location>
        <begin position="126"/>
        <end position="175"/>
    </location>
</feature>
<feature type="disulfide bond" evidence="3">
    <location>
        <begin position="141"/>
        <end position="172"/>
    </location>
</feature>
<feature type="disulfide bond" evidence="3">
    <location>
        <begin position="222"/>
        <end position="276"/>
    </location>
</feature>
<feature type="disulfide bond" evidence="3">
    <location>
        <begin position="414"/>
        <end position="481"/>
    </location>
</feature>